<organism>
    <name type="scientific">Yersinia enterocolitica serotype O:8 / biotype 1B (strain NCTC 13174 / 8081)</name>
    <dbReference type="NCBI Taxonomy" id="393305"/>
    <lineage>
        <taxon>Bacteria</taxon>
        <taxon>Pseudomonadati</taxon>
        <taxon>Pseudomonadota</taxon>
        <taxon>Gammaproteobacteria</taxon>
        <taxon>Enterobacterales</taxon>
        <taxon>Yersiniaceae</taxon>
        <taxon>Yersinia</taxon>
    </lineage>
</organism>
<name>HEM1_YERE8</name>
<protein>
    <recommendedName>
        <fullName evidence="1">Glutamyl-tRNA reductase</fullName>
        <shortName evidence="1">GluTR</shortName>
        <ecNumber evidence="1">1.2.1.70</ecNumber>
    </recommendedName>
</protein>
<accession>A1JRU4</accession>
<gene>
    <name evidence="1" type="primary">hemA</name>
    <name type="ordered locus">YE2432</name>
</gene>
<evidence type="ECO:0000255" key="1">
    <source>
        <dbReference type="HAMAP-Rule" id="MF_00087"/>
    </source>
</evidence>
<comment type="function">
    <text evidence="1">Catalyzes the NADPH-dependent reduction of glutamyl-tRNA(Glu) to glutamate 1-semialdehyde (GSA).</text>
</comment>
<comment type="catalytic activity">
    <reaction evidence="1">
        <text>(S)-4-amino-5-oxopentanoate + tRNA(Glu) + NADP(+) = L-glutamyl-tRNA(Glu) + NADPH + H(+)</text>
        <dbReference type="Rhea" id="RHEA:12344"/>
        <dbReference type="Rhea" id="RHEA-COMP:9663"/>
        <dbReference type="Rhea" id="RHEA-COMP:9680"/>
        <dbReference type="ChEBI" id="CHEBI:15378"/>
        <dbReference type="ChEBI" id="CHEBI:57501"/>
        <dbReference type="ChEBI" id="CHEBI:57783"/>
        <dbReference type="ChEBI" id="CHEBI:58349"/>
        <dbReference type="ChEBI" id="CHEBI:78442"/>
        <dbReference type="ChEBI" id="CHEBI:78520"/>
        <dbReference type="EC" id="1.2.1.70"/>
    </reaction>
</comment>
<comment type="pathway">
    <text evidence="1">Porphyrin-containing compound metabolism; protoporphyrin-IX biosynthesis; 5-aminolevulinate from L-glutamyl-tRNA(Glu): step 1/2.</text>
</comment>
<comment type="subunit">
    <text evidence="1">Homodimer.</text>
</comment>
<comment type="domain">
    <text evidence="1">Possesses an unusual extended V-shaped dimeric structure with each monomer consisting of three distinct domains arranged along a curved 'spinal' alpha-helix. The N-terminal catalytic domain specifically recognizes the glutamate moiety of the substrate. The second domain is the NADPH-binding domain, and the third C-terminal domain is responsible for dimerization.</text>
</comment>
<comment type="miscellaneous">
    <text evidence="1">During catalysis, the active site Cys acts as a nucleophile attacking the alpha-carbonyl group of tRNA-bound glutamate with the formation of a thioester intermediate between enzyme and glutamate, and the concomitant release of tRNA(Glu). The thioester intermediate is finally reduced by direct hydride transfer from NADPH, to form the product GSA.</text>
</comment>
<comment type="similarity">
    <text evidence="1">Belongs to the glutamyl-tRNA reductase family.</text>
</comment>
<feature type="chain" id="PRO_1000004727" description="Glutamyl-tRNA reductase">
    <location>
        <begin position="1"/>
        <end position="420"/>
    </location>
</feature>
<feature type="active site" description="Nucleophile" evidence="1">
    <location>
        <position position="50"/>
    </location>
</feature>
<feature type="binding site" evidence="1">
    <location>
        <begin position="49"/>
        <end position="52"/>
    </location>
    <ligand>
        <name>substrate</name>
    </ligand>
</feature>
<feature type="binding site" evidence="1">
    <location>
        <position position="109"/>
    </location>
    <ligand>
        <name>substrate</name>
    </ligand>
</feature>
<feature type="binding site" evidence="1">
    <location>
        <begin position="114"/>
        <end position="116"/>
    </location>
    <ligand>
        <name>substrate</name>
    </ligand>
</feature>
<feature type="binding site" evidence="1">
    <location>
        <position position="120"/>
    </location>
    <ligand>
        <name>substrate</name>
    </ligand>
</feature>
<feature type="binding site" evidence="1">
    <location>
        <begin position="189"/>
        <end position="194"/>
    </location>
    <ligand>
        <name>NADP(+)</name>
        <dbReference type="ChEBI" id="CHEBI:58349"/>
    </ligand>
</feature>
<feature type="site" description="Important for activity" evidence="1">
    <location>
        <position position="99"/>
    </location>
</feature>
<proteinExistence type="inferred from homology"/>
<sequence length="420" mass="46462">MTLLALGINHKTAPVSLRERVTFSPESIDQALASLLQQPLVQGGVVLSTCNRTELYLSVEQQENLHEQLIAWLCNYHKLSPDEVKKSLYWHHGNDAVSHLMRVASGLDSLVLGEPQILGQVKKAFAESQREQSLSGELERLFQKTFSVAKRVRTETEIGASAVSVAFAACTLARQIFESLSELNVLLVGAGETIELVARHLREHQVKHMIIANRTRERAQALATEVGAEVITLPEIDARLADADIIISSTASPLPIIGKGMVERALKSRRNQPMLFVDIAVPRDIEPEVGKLSNAYLYSVDDLQAIIQHNMAQRQAAAVQAESIVQQESMNFMTWLRAQGAVETIRDYRSQAEQVRSEMTAKALAAIEQGANVEQVVNELAHKLTNRLIHAPTKSLQQAASDGDMERLQLLRDSLGLDQH</sequence>
<keyword id="KW-0521">NADP</keyword>
<keyword id="KW-0560">Oxidoreductase</keyword>
<keyword id="KW-0627">Porphyrin biosynthesis</keyword>
<reference key="1">
    <citation type="journal article" date="2006" name="PLoS Genet.">
        <title>The complete genome sequence and comparative genome analysis of the high pathogenicity Yersinia enterocolitica strain 8081.</title>
        <authorList>
            <person name="Thomson N.R."/>
            <person name="Howard S."/>
            <person name="Wren B.W."/>
            <person name="Holden M.T.G."/>
            <person name="Crossman L."/>
            <person name="Challis G.L."/>
            <person name="Churcher C."/>
            <person name="Mungall K."/>
            <person name="Brooks K."/>
            <person name="Chillingworth T."/>
            <person name="Feltwell T."/>
            <person name="Abdellah Z."/>
            <person name="Hauser H."/>
            <person name="Jagels K."/>
            <person name="Maddison M."/>
            <person name="Moule S."/>
            <person name="Sanders M."/>
            <person name="Whitehead S."/>
            <person name="Quail M.A."/>
            <person name="Dougan G."/>
            <person name="Parkhill J."/>
            <person name="Prentice M.B."/>
        </authorList>
    </citation>
    <scope>NUCLEOTIDE SEQUENCE [LARGE SCALE GENOMIC DNA]</scope>
    <source>
        <strain>NCTC 13174 / 8081</strain>
    </source>
</reference>
<dbReference type="EC" id="1.2.1.70" evidence="1"/>
<dbReference type="EMBL" id="AM286415">
    <property type="protein sequence ID" value="CAL12479.1"/>
    <property type="molecule type" value="Genomic_DNA"/>
</dbReference>
<dbReference type="RefSeq" id="WP_005169107.1">
    <property type="nucleotide sequence ID" value="NC_008800.1"/>
</dbReference>
<dbReference type="RefSeq" id="YP_001006645.1">
    <property type="nucleotide sequence ID" value="NC_008800.1"/>
</dbReference>
<dbReference type="SMR" id="A1JRU4"/>
<dbReference type="GeneID" id="93972784"/>
<dbReference type="KEGG" id="yen:YE2432"/>
<dbReference type="PATRIC" id="fig|393305.7.peg.2583"/>
<dbReference type="eggNOG" id="COG0373">
    <property type="taxonomic scope" value="Bacteria"/>
</dbReference>
<dbReference type="HOGENOM" id="CLU_035113_2_2_6"/>
<dbReference type="OrthoDB" id="110209at2"/>
<dbReference type="UniPathway" id="UPA00251">
    <property type="reaction ID" value="UER00316"/>
</dbReference>
<dbReference type="Proteomes" id="UP000000642">
    <property type="component" value="Chromosome"/>
</dbReference>
<dbReference type="GO" id="GO:0008883">
    <property type="term" value="F:glutamyl-tRNA reductase activity"/>
    <property type="evidence" value="ECO:0007669"/>
    <property type="project" value="UniProtKB-UniRule"/>
</dbReference>
<dbReference type="GO" id="GO:0050661">
    <property type="term" value="F:NADP binding"/>
    <property type="evidence" value="ECO:0007669"/>
    <property type="project" value="InterPro"/>
</dbReference>
<dbReference type="GO" id="GO:0019353">
    <property type="term" value="P:protoporphyrinogen IX biosynthetic process from glutamate"/>
    <property type="evidence" value="ECO:0007669"/>
    <property type="project" value="TreeGrafter"/>
</dbReference>
<dbReference type="CDD" id="cd05213">
    <property type="entry name" value="NAD_bind_Glutamyl_tRNA_reduct"/>
    <property type="match status" value="1"/>
</dbReference>
<dbReference type="FunFam" id="3.30.460.30:FF:000001">
    <property type="entry name" value="Glutamyl-tRNA reductase"/>
    <property type="match status" value="1"/>
</dbReference>
<dbReference type="FunFam" id="3.40.50.720:FF:000031">
    <property type="entry name" value="Glutamyl-tRNA reductase"/>
    <property type="match status" value="1"/>
</dbReference>
<dbReference type="Gene3D" id="3.30.460.30">
    <property type="entry name" value="Glutamyl-tRNA reductase, N-terminal domain"/>
    <property type="match status" value="1"/>
</dbReference>
<dbReference type="Gene3D" id="3.40.50.720">
    <property type="entry name" value="NAD(P)-binding Rossmann-like Domain"/>
    <property type="match status" value="1"/>
</dbReference>
<dbReference type="HAMAP" id="MF_00087">
    <property type="entry name" value="Glu_tRNA_reductase"/>
    <property type="match status" value="1"/>
</dbReference>
<dbReference type="InterPro" id="IPR000343">
    <property type="entry name" value="4pyrrol_synth_GluRdtase"/>
</dbReference>
<dbReference type="InterPro" id="IPR015896">
    <property type="entry name" value="4pyrrol_synth_GluRdtase_dimer"/>
</dbReference>
<dbReference type="InterPro" id="IPR015895">
    <property type="entry name" value="4pyrrol_synth_GluRdtase_N"/>
</dbReference>
<dbReference type="InterPro" id="IPR018214">
    <property type="entry name" value="GluRdtase_CS"/>
</dbReference>
<dbReference type="InterPro" id="IPR036453">
    <property type="entry name" value="GluRdtase_dimer_dom_sf"/>
</dbReference>
<dbReference type="InterPro" id="IPR036343">
    <property type="entry name" value="GluRdtase_N_sf"/>
</dbReference>
<dbReference type="InterPro" id="IPR036291">
    <property type="entry name" value="NAD(P)-bd_dom_sf"/>
</dbReference>
<dbReference type="InterPro" id="IPR006151">
    <property type="entry name" value="Shikm_DH/Glu-tRNA_Rdtase"/>
</dbReference>
<dbReference type="NCBIfam" id="TIGR01035">
    <property type="entry name" value="hemA"/>
    <property type="match status" value="1"/>
</dbReference>
<dbReference type="PANTHER" id="PTHR43013">
    <property type="entry name" value="GLUTAMYL-TRNA REDUCTASE"/>
    <property type="match status" value="1"/>
</dbReference>
<dbReference type="PANTHER" id="PTHR43013:SF1">
    <property type="entry name" value="GLUTAMYL-TRNA REDUCTASE"/>
    <property type="match status" value="1"/>
</dbReference>
<dbReference type="Pfam" id="PF00745">
    <property type="entry name" value="GlutR_dimer"/>
    <property type="match status" value="1"/>
</dbReference>
<dbReference type="Pfam" id="PF05201">
    <property type="entry name" value="GlutR_N"/>
    <property type="match status" value="1"/>
</dbReference>
<dbReference type="Pfam" id="PF01488">
    <property type="entry name" value="Shikimate_DH"/>
    <property type="match status" value="1"/>
</dbReference>
<dbReference type="PIRSF" id="PIRSF000445">
    <property type="entry name" value="4pyrrol_synth_GluRdtase"/>
    <property type="match status" value="1"/>
</dbReference>
<dbReference type="SUPFAM" id="SSF69742">
    <property type="entry name" value="Glutamyl tRNA-reductase catalytic, N-terminal domain"/>
    <property type="match status" value="1"/>
</dbReference>
<dbReference type="SUPFAM" id="SSF69075">
    <property type="entry name" value="Glutamyl tRNA-reductase dimerization domain"/>
    <property type="match status" value="1"/>
</dbReference>
<dbReference type="SUPFAM" id="SSF51735">
    <property type="entry name" value="NAD(P)-binding Rossmann-fold domains"/>
    <property type="match status" value="1"/>
</dbReference>
<dbReference type="PROSITE" id="PS00747">
    <property type="entry name" value="GLUTR"/>
    <property type="match status" value="1"/>
</dbReference>